<gene>
    <name evidence="1" type="primary">rpsK</name>
    <name type="ordered locus">Sca_1710</name>
</gene>
<keyword id="KW-1185">Reference proteome</keyword>
<keyword id="KW-0687">Ribonucleoprotein</keyword>
<keyword id="KW-0689">Ribosomal protein</keyword>
<keyword id="KW-0694">RNA-binding</keyword>
<keyword id="KW-0699">rRNA-binding</keyword>
<accession>B9DM52</accession>
<sequence>MARKQVSRKRRVKKNVENGVAHIRSTFNNTIVTITDEFGNALSWSSAGALGFKGSKKSTPFAAQMASETASKTAMEHGLKSVEVTVKGPGPGRESAIRALQSAGLEVTAIRDVTPVPHNGCRPPKRRRV</sequence>
<organism>
    <name type="scientific">Staphylococcus carnosus (strain TM300)</name>
    <dbReference type="NCBI Taxonomy" id="396513"/>
    <lineage>
        <taxon>Bacteria</taxon>
        <taxon>Bacillati</taxon>
        <taxon>Bacillota</taxon>
        <taxon>Bacilli</taxon>
        <taxon>Bacillales</taxon>
        <taxon>Staphylococcaceae</taxon>
        <taxon>Staphylococcus</taxon>
    </lineage>
</organism>
<protein>
    <recommendedName>
        <fullName evidence="1">Small ribosomal subunit protein uS11</fullName>
    </recommendedName>
    <alternativeName>
        <fullName evidence="2">30S ribosomal protein S11</fullName>
    </alternativeName>
</protein>
<comment type="function">
    <text evidence="1">Located on the platform of the 30S subunit, it bridges several disparate RNA helices of the 16S rRNA. Forms part of the Shine-Dalgarno cleft in the 70S ribosome.</text>
</comment>
<comment type="subunit">
    <text evidence="1">Part of the 30S ribosomal subunit. Interacts with proteins S7 and S18. Binds to IF-3.</text>
</comment>
<comment type="similarity">
    <text evidence="1">Belongs to the universal ribosomal protein uS11 family.</text>
</comment>
<dbReference type="EMBL" id="AM295250">
    <property type="protein sequence ID" value="CAL28616.1"/>
    <property type="molecule type" value="Genomic_DNA"/>
</dbReference>
<dbReference type="RefSeq" id="WP_015900956.1">
    <property type="nucleotide sequence ID" value="NC_012121.1"/>
</dbReference>
<dbReference type="SMR" id="B9DM52"/>
<dbReference type="GeneID" id="93794169"/>
<dbReference type="KEGG" id="sca:SCA_1710"/>
<dbReference type="eggNOG" id="COG0100">
    <property type="taxonomic scope" value="Bacteria"/>
</dbReference>
<dbReference type="HOGENOM" id="CLU_072439_5_0_9"/>
<dbReference type="OrthoDB" id="9806415at2"/>
<dbReference type="BioCyc" id="SCAR396513:SCA_RS08715-MONOMER"/>
<dbReference type="Proteomes" id="UP000000444">
    <property type="component" value="Chromosome"/>
</dbReference>
<dbReference type="GO" id="GO:1990904">
    <property type="term" value="C:ribonucleoprotein complex"/>
    <property type="evidence" value="ECO:0007669"/>
    <property type="project" value="UniProtKB-KW"/>
</dbReference>
<dbReference type="GO" id="GO:0005840">
    <property type="term" value="C:ribosome"/>
    <property type="evidence" value="ECO:0007669"/>
    <property type="project" value="UniProtKB-KW"/>
</dbReference>
<dbReference type="GO" id="GO:0019843">
    <property type="term" value="F:rRNA binding"/>
    <property type="evidence" value="ECO:0007669"/>
    <property type="project" value="UniProtKB-UniRule"/>
</dbReference>
<dbReference type="GO" id="GO:0003735">
    <property type="term" value="F:structural constituent of ribosome"/>
    <property type="evidence" value="ECO:0007669"/>
    <property type="project" value="InterPro"/>
</dbReference>
<dbReference type="GO" id="GO:0006412">
    <property type="term" value="P:translation"/>
    <property type="evidence" value="ECO:0007669"/>
    <property type="project" value="UniProtKB-UniRule"/>
</dbReference>
<dbReference type="FunFam" id="3.30.420.80:FF:000001">
    <property type="entry name" value="30S ribosomal protein S11"/>
    <property type="match status" value="1"/>
</dbReference>
<dbReference type="Gene3D" id="3.30.420.80">
    <property type="entry name" value="Ribosomal protein S11"/>
    <property type="match status" value="1"/>
</dbReference>
<dbReference type="HAMAP" id="MF_01310">
    <property type="entry name" value="Ribosomal_uS11"/>
    <property type="match status" value="1"/>
</dbReference>
<dbReference type="InterPro" id="IPR001971">
    <property type="entry name" value="Ribosomal_uS11"/>
</dbReference>
<dbReference type="InterPro" id="IPR019981">
    <property type="entry name" value="Ribosomal_uS11_bac-type"/>
</dbReference>
<dbReference type="InterPro" id="IPR018102">
    <property type="entry name" value="Ribosomal_uS11_CS"/>
</dbReference>
<dbReference type="InterPro" id="IPR036967">
    <property type="entry name" value="Ribosomal_uS11_sf"/>
</dbReference>
<dbReference type="NCBIfam" id="NF003698">
    <property type="entry name" value="PRK05309.1"/>
    <property type="match status" value="1"/>
</dbReference>
<dbReference type="NCBIfam" id="TIGR03632">
    <property type="entry name" value="uS11_bact"/>
    <property type="match status" value="1"/>
</dbReference>
<dbReference type="PANTHER" id="PTHR11759">
    <property type="entry name" value="40S RIBOSOMAL PROTEIN S14/30S RIBOSOMAL PROTEIN S11"/>
    <property type="match status" value="1"/>
</dbReference>
<dbReference type="Pfam" id="PF00411">
    <property type="entry name" value="Ribosomal_S11"/>
    <property type="match status" value="1"/>
</dbReference>
<dbReference type="PIRSF" id="PIRSF002131">
    <property type="entry name" value="Ribosomal_S11"/>
    <property type="match status" value="1"/>
</dbReference>
<dbReference type="SUPFAM" id="SSF53137">
    <property type="entry name" value="Translational machinery components"/>
    <property type="match status" value="1"/>
</dbReference>
<dbReference type="PROSITE" id="PS00054">
    <property type="entry name" value="RIBOSOMAL_S11"/>
    <property type="match status" value="1"/>
</dbReference>
<feature type="chain" id="PRO_1000165567" description="Small ribosomal subunit protein uS11">
    <location>
        <begin position="1"/>
        <end position="129"/>
    </location>
</feature>
<name>RS11_STACT</name>
<reference key="1">
    <citation type="journal article" date="2009" name="Appl. Environ. Microbiol.">
        <title>Genome analysis of the meat starter culture bacterium Staphylococcus carnosus TM300.</title>
        <authorList>
            <person name="Rosenstein R."/>
            <person name="Nerz C."/>
            <person name="Biswas L."/>
            <person name="Resch A."/>
            <person name="Raddatz G."/>
            <person name="Schuster S.C."/>
            <person name="Goetz F."/>
        </authorList>
    </citation>
    <scope>NUCLEOTIDE SEQUENCE [LARGE SCALE GENOMIC DNA]</scope>
    <source>
        <strain>TM300</strain>
    </source>
</reference>
<evidence type="ECO:0000255" key="1">
    <source>
        <dbReference type="HAMAP-Rule" id="MF_01310"/>
    </source>
</evidence>
<evidence type="ECO:0000305" key="2"/>
<proteinExistence type="inferred from homology"/>